<sequence length="353" mass="39539">MTIALGQFTKDENDLFDTMDDWLRRDRFVFVGWSGLLLFPCAYFAVGGWFTGTTFVTSWYTHGLASSYLEGCNFLTAAVSTPANSLAHSLLLLWGPEAQGDFTRWCQLGGLWTFVALHGAFGLIGFMLRQFELARSVQLRPYNAIAFSGPIAVFVSVFLIYPLGQSGWFFAPSFGVAAIFRFILFFQGFHNWTLNPFHMMGVAGVLGAALLCAIHGATVENTLFEDGDGANTFRAFNPTQSEETYSMVTANRFWSQIFGVAFSNKRWLHFFMLFVPVTGLWMSALGVVGLALNLRAYDFVSQEIRAAEDPEFETFYTKNILLNEGIRAWMAAQDQPHENLIFPEEVLPRGNAL</sequence>
<accession>A7Y3C4</accession>
<dbReference type="EC" id="1.10.3.9" evidence="2"/>
<dbReference type="EMBL" id="EU118126">
    <property type="protein sequence ID" value="ABV02343.1"/>
    <property type="molecule type" value="Genomic_DNA"/>
</dbReference>
<dbReference type="RefSeq" id="YP_001468303.1">
    <property type="nucleotide sequence ID" value="NC_009808.1"/>
</dbReference>
<dbReference type="SMR" id="A7Y3C4"/>
<dbReference type="GeneID" id="5601269"/>
<dbReference type="GO" id="GO:0009535">
    <property type="term" value="C:chloroplast thylakoid membrane"/>
    <property type="evidence" value="ECO:0007669"/>
    <property type="project" value="UniProtKB-SubCell"/>
</dbReference>
<dbReference type="GO" id="GO:0009523">
    <property type="term" value="C:photosystem II"/>
    <property type="evidence" value="ECO:0007669"/>
    <property type="project" value="UniProtKB-KW"/>
</dbReference>
<dbReference type="GO" id="GO:0016168">
    <property type="term" value="F:chlorophyll binding"/>
    <property type="evidence" value="ECO:0007669"/>
    <property type="project" value="UniProtKB-UniRule"/>
</dbReference>
<dbReference type="GO" id="GO:0045156">
    <property type="term" value="F:electron transporter, transferring electrons within the cyclic electron transport pathway of photosynthesis activity"/>
    <property type="evidence" value="ECO:0007669"/>
    <property type="project" value="InterPro"/>
</dbReference>
<dbReference type="GO" id="GO:0005506">
    <property type="term" value="F:iron ion binding"/>
    <property type="evidence" value="ECO:0007669"/>
    <property type="project" value="UniProtKB-UniRule"/>
</dbReference>
<dbReference type="GO" id="GO:0010242">
    <property type="term" value="F:oxygen evolving activity"/>
    <property type="evidence" value="ECO:0007669"/>
    <property type="project" value="UniProtKB-EC"/>
</dbReference>
<dbReference type="GO" id="GO:0009772">
    <property type="term" value="P:photosynthetic electron transport in photosystem II"/>
    <property type="evidence" value="ECO:0007669"/>
    <property type="project" value="InterPro"/>
</dbReference>
<dbReference type="CDD" id="cd09288">
    <property type="entry name" value="Photosystem-II_D2"/>
    <property type="match status" value="1"/>
</dbReference>
<dbReference type="FunFam" id="1.20.85.10:FF:000001">
    <property type="entry name" value="photosystem II D2 protein-like"/>
    <property type="match status" value="1"/>
</dbReference>
<dbReference type="Gene3D" id="1.20.85.10">
    <property type="entry name" value="Photosystem II protein D1-like"/>
    <property type="match status" value="1"/>
</dbReference>
<dbReference type="HAMAP" id="MF_01383">
    <property type="entry name" value="PSII_PsbD_D2"/>
    <property type="match status" value="1"/>
</dbReference>
<dbReference type="InterPro" id="IPR055266">
    <property type="entry name" value="D1/D2"/>
</dbReference>
<dbReference type="InterPro" id="IPR036854">
    <property type="entry name" value="Photo_II_D1/D2_sf"/>
</dbReference>
<dbReference type="InterPro" id="IPR000484">
    <property type="entry name" value="Photo_RC_L/M"/>
</dbReference>
<dbReference type="InterPro" id="IPR055265">
    <property type="entry name" value="Photo_RC_L/M_CS"/>
</dbReference>
<dbReference type="InterPro" id="IPR005868">
    <property type="entry name" value="PSII_PsbD/D2"/>
</dbReference>
<dbReference type="NCBIfam" id="TIGR01152">
    <property type="entry name" value="psbD"/>
    <property type="match status" value="1"/>
</dbReference>
<dbReference type="PANTHER" id="PTHR33149:SF12">
    <property type="entry name" value="PHOTOSYSTEM II D2 PROTEIN"/>
    <property type="match status" value="1"/>
</dbReference>
<dbReference type="PANTHER" id="PTHR33149">
    <property type="entry name" value="PHOTOSYSTEM II PROTEIN D1"/>
    <property type="match status" value="1"/>
</dbReference>
<dbReference type="Pfam" id="PF00124">
    <property type="entry name" value="Photo_RC"/>
    <property type="match status" value="1"/>
</dbReference>
<dbReference type="PRINTS" id="PR00256">
    <property type="entry name" value="REACTNCENTRE"/>
</dbReference>
<dbReference type="SUPFAM" id="SSF81483">
    <property type="entry name" value="Bacterial photosystem II reaction centre, L and M subunits"/>
    <property type="match status" value="1"/>
</dbReference>
<dbReference type="PROSITE" id="PS00244">
    <property type="entry name" value="REACTION_CENTER"/>
    <property type="match status" value="1"/>
</dbReference>
<name>PSBD_IPOPU</name>
<protein>
    <recommendedName>
        <fullName evidence="2">Photosystem II D2 protein</fullName>
        <shortName evidence="2">PSII D2 protein</shortName>
        <ecNumber evidence="2">1.10.3.9</ecNumber>
    </recommendedName>
    <alternativeName>
        <fullName evidence="2">Photosystem Q(A) protein</fullName>
    </alternativeName>
</protein>
<comment type="function">
    <text evidence="2">Photosystem II (PSII) is a light-driven water:plastoquinone oxidoreductase that uses light energy to abstract electrons from H(2)O, generating O(2) and a proton gradient subsequently used for ATP formation. It consists of a core antenna complex that captures photons, and an electron transfer chain that converts photonic excitation into a charge separation. The D1/D2 (PsbA/PsbD) reaction center heterodimer binds P680, the primary electron donor of PSII as well as several subsequent electron acceptors. D2 is needed for assembly of a stable PSII complex.</text>
</comment>
<comment type="catalytic activity">
    <reaction evidence="2">
        <text>2 a plastoquinone + 4 hnu + 2 H2O = 2 a plastoquinol + O2</text>
        <dbReference type="Rhea" id="RHEA:36359"/>
        <dbReference type="Rhea" id="RHEA-COMP:9561"/>
        <dbReference type="Rhea" id="RHEA-COMP:9562"/>
        <dbReference type="ChEBI" id="CHEBI:15377"/>
        <dbReference type="ChEBI" id="CHEBI:15379"/>
        <dbReference type="ChEBI" id="CHEBI:17757"/>
        <dbReference type="ChEBI" id="CHEBI:30212"/>
        <dbReference type="ChEBI" id="CHEBI:62192"/>
        <dbReference type="EC" id="1.10.3.9"/>
    </reaction>
</comment>
<comment type="cofactor">
    <text evidence="2">The D1/D2 heterodimer binds P680, chlorophylls that are the primary electron donor of PSII, and subsequent electron acceptors. It shares a non-heme iron and each subunit binds pheophytin, quinone, additional chlorophylls, carotenoids and lipids. There is also a Cl(-1) ion associated with D1 and D2, which is required for oxygen evolution. The PSII complex binds additional chlorophylls, carotenoids and specific lipids.</text>
</comment>
<comment type="subunit">
    <text evidence="2">PSII is composed of 1 copy each of membrane proteins PsbA, PsbB, PsbC, PsbD, PsbE, PsbF, PsbH, PsbI, PsbJ, PsbK, PsbL, PsbM, PsbT, PsbX, PsbY, PsbZ, Psb30/Ycf12, at least 3 peripheral proteins of the oxygen-evolving complex and a large number of cofactors. It forms dimeric complexes.</text>
</comment>
<comment type="subcellular location">
    <subcellularLocation>
        <location evidence="2">Plastid</location>
        <location evidence="2">Chloroplast thylakoid membrane</location>
        <topology evidence="2">Multi-pass membrane protein</topology>
    </subcellularLocation>
</comment>
<comment type="miscellaneous">
    <text evidence="2">2 of the reaction center chlorophylls (ChlD1 and ChlD2) are entirely coordinated by water.</text>
</comment>
<comment type="similarity">
    <text evidence="2">Belongs to the reaction center PufL/M/PsbA/D family.</text>
</comment>
<proteinExistence type="inferred from homology"/>
<reference key="1">
    <citation type="journal article" date="2007" name="BMC Plant Biol.">
        <title>Complete plastid genome sequences suggest strong selection for retention of photosynthetic genes in the parasitic plant genus Cuscuta.</title>
        <authorList>
            <person name="McNeal J.R."/>
            <person name="Kuehl J.V."/>
            <person name="Boore J.L."/>
            <person name="dePamphilis C.W."/>
        </authorList>
    </citation>
    <scope>NUCLEOTIDE SEQUENCE [LARGE SCALE GENOMIC DNA]</scope>
</reference>
<keyword id="KW-0007">Acetylation</keyword>
<keyword id="KW-0148">Chlorophyll</keyword>
<keyword id="KW-0150">Chloroplast</keyword>
<keyword id="KW-0157">Chromophore</keyword>
<keyword id="KW-0249">Electron transport</keyword>
<keyword id="KW-0408">Iron</keyword>
<keyword id="KW-0460">Magnesium</keyword>
<keyword id="KW-0472">Membrane</keyword>
<keyword id="KW-0479">Metal-binding</keyword>
<keyword id="KW-0560">Oxidoreductase</keyword>
<keyword id="KW-0597">Phosphoprotein</keyword>
<keyword id="KW-0602">Photosynthesis</keyword>
<keyword id="KW-0604">Photosystem II</keyword>
<keyword id="KW-0934">Plastid</keyword>
<keyword id="KW-0793">Thylakoid</keyword>
<keyword id="KW-0812">Transmembrane</keyword>
<keyword id="KW-1133">Transmembrane helix</keyword>
<keyword id="KW-0813">Transport</keyword>
<evidence type="ECO:0000250" key="1">
    <source>
        <dbReference type="UniProtKB" id="P56761"/>
    </source>
</evidence>
<evidence type="ECO:0000255" key="2">
    <source>
        <dbReference type="HAMAP-Rule" id="MF_01383"/>
    </source>
</evidence>
<feature type="initiator methionine" description="Removed" evidence="1">
    <location>
        <position position="1"/>
    </location>
</feature>
<feature type="chain" id="PRO_0000359658" description="Photosystem II D2 protein">
    <location>
        <begin position="2"/>
        <end position="353"/>
    </location>
</feature>
<feature type="transmembrane region" description="Helical" evidence="2">
    <location>
        <begin position="41"/>
        <end position="61"/>
    </location>
</feature>
<feature type="transmembrane region" description="Helical" evidence="2">
    <location>
        <begin position="125"/>
        <end position="141"/>
    </location>
</feature>
<feature type="transmembrane region" description="Helical" evidence="2">
    <location>
        <begin position="153"/>
        <end position="166"/>
    </location>
</feature>
<feature type="transmembrane region" description="Helical" evidence="2">
    <location>
        <begin position="208"/>
        <end position="228"/>
    </location>
</feature>
<feature type="transmembrane region" description="Helical" evidence="2">
    <location>
        <begin position="279"/>
        <end position="295"/>
    </location>
</feature>
<feature type="binding site" description="axial binding residue" evidence="2">
    <location>
        <position position="118"/>
    </location>
    <ligand>
        <name>chlorophyll a</name>
        <dbReference type="ChEBI" id="CHEBI:58416"/>
        <label>ChlzD2</label>
    </ligand>
    <ligandPart>
        <name>Mg</name>
        <dbReference type="ChEBI" id="CHEBI:25107"/>
    </ligandPart>
</feature>
<feature type="binding site" evidence="2">
    <location>
        <position position="130"/>
    </location>
    <ligand>
        <name>pheophytin a</name>
        <dbReference type="ChEBI" id="CHEBI:136840"/>
        <label>D2</label>
    </ligand>
</feature>
<feature type="binding site" evidence="2">
    <location>
        <position position="143"/>
    </location>
    <ligand>
        <name>pheophytin a</name>
        <dbReference type="ChEBI" id="CHEBI:136840"/>
        <label>D2</label>
    </ligand>
</feature>
<feature type="binding site" description="axial binding residue" evidence="2">
    <location>
        <position position="198"/>
    </location>
    <ligand>
        <name>chlorophyll a</name>
        <dbReference type="ChEBI" id="CHEBI:58416"/>
        <label>PD2</label>
    </ligand>
    <ligandPart>
        <name>Mg</name>
        <dbReference type="ChEBI" id="CHEBI:25107"/>
    </ligandPart>
</feature>
<feature type="binding site" evidence="2">
    <location>
        <position position="215"/>
    </location>
    <ligand>
        <name>a plastoquinone</name>
        <dbReference type="ChEBI" id="CHEBI:17757"/>
        <label>Q(A)</label>
    </ligand>
</feature>
<feature type="binding site" evidence="2">
    <location>
        <position position="215"/>
    </location>
    <ligand>
        <name>Fe cation</name>
        <dbReference type="ChEBI" id="CHEBI:24875"/>
        <note>ligand shared with heterodimeric partner</note>
    </ligand>
</feature>
<feature type="binding site" evidence="2">
    <location>
        <position position="262"/>
    </location>
    <ligand>
        <name>a plastoquinone</name>
        <dbReference type="ChEBI" id="CHEBI:17757"/>
        <label>Q(A)</label>
    </ligand>
</feature>
<feature type="binding site" evidence="2">
    <location>
        <position position="269"/>
    </location>
    <ligand>
        <name>Fe cation</name>
        <dbReference type="ChEBI" id="CHEBI:24875"/>
        <note>ligand shared with heterodimeric partner</note>
    </ligand>
</feature>
<feature type="modified residue" description="N-acetylthreonine" evidence="1">
    <location>
        <position position="2"/>
    </location>
</feature>
<feature type="modified residue" description="Phosphothreonine" evidence="1">
    <location>
        <position position="2"/>
    </location>
</feature>
<geneLocation type="chloroplast"/>
<organism>
    <name type="scientific">Ipomoea purpurea</name>
    <name type="common">Common morning glory</name>
    <name type="synonym">Pharbitis purpurea</name>
    <dbReference type="NCBI Taxonomy" id="4121"/>
    <lineage>
        <taxon>Eukaryota</taxon>
        <taxon>Viridiplantae</taxon>
        <taxon>Streptophyta</taxon>
        <taxon>Embryophyta</taxon>
        <taxon>Tracheophyta</taxon>
        <taxon>Spermatophyta</taxon>
        <taxon>Magnoliopsida</taxon>
        <taxon>eudicotyledons</taxon>
        <taxon>Gunneridae</taxon>
        <taxon>Pentapetalae</taxon>
        <taxon>asterids</taxon>
        <taxon>lamiids</taxon>
        <taxon>Solanales</taxon>
        <taxon>Convolvulaceae</taxon>
        <taxon>Ipomoeeae</taxon>
        <taxon>Ipomoea</taxon>
    </lineage>
</organism>
<gene>
    <name evidence="2" type="primary">psbD</name>
</gene>